<reference key="1">
    <citation type="journal article" date="2008" name="J. Bacteriol.">
        <title>The complete genome sequence of Escherichia coli DH10B: insights into the biology of a laboratory workhorse.</title>
        <authorList>
            <person name="Durfee T."/>
            <person name="Nelson R."/>
            <person name="Baldwin S."/>
            <person name="Plunkett G. III"/>
            <person name="Burland V."/>
            <person name="Mau B."/>
            <person name="Petrosino J.F."/>
            <person name="Qin X."/>
            <person name="Muzny D.M."/>
            <person name="Ayele M."/>
            <person name="Gibbs R.A."/>
            <person name="Csorgo B."/>
            <person name="Posfai G."/>
            <person name="Weinstock G.M."/>
            <person name="Blattner F.R."/>
        </authorList>
    </citation>
    <scope>NUCLEOTIDE SEQUENCE [LARGE SCALE GENOMIC DNA]</scope>
    <source>
        <strain>K12 / DH10B</strain>
    </source>
</reference>
<proteinExistence type="inferred from homology"/>
<sequence>MAQFEWVHAAWLALAIVLEIVANVFLKFSDGFRRKIFGLLSLAAVLAAFSALSQAVKGIDLSVAYALWGGFGIAATLAAGWILFGQRLNRKGWIGLVLLLAGMIMVKLA</sequence>
<gene>
    <name evidence="1" type="primary">mdtI</name>
    <name type="ordered locus">ECDH10B_1732</name>
</gene>
<dbReference type="EMBL" id="CP000948">
    <property type="protein sequence ID" value="ACB02805.1"/>
    <property type="molecule type" value="Genomic_DNA"/>
</dbReference>
<dbReference type="RefSeq" id="WP_000046661.1">
    <property type="nucleotide sequence ID" value="NC_010473.1"/>
</dbReference>
<dbReference type="SMR" id="B1XF64"/>
<dbReference type="GeneID" id="93775747"/>
<dbReference type="KEGG" id="ecd:ECDH10B_1732"/>
<dbReference type="HOGENOM" id="CLU_133067_0_4_6"/>
<dbReference type="GO" id="GO:0005886">
    <property type="term" value="C:plasma membrane"/>
    <property type="evidence" value="ECO:0007669"/>
    <property type="project" value="UniProtKB-SubCell"/>
</dbReference>
<dbReference type="GO" id="GO:0015199">
    <property type="term" value="F:amino-acid betaine transmembrane transporter activity"/>
    <property type="evidence" value="ECO:0007669"/>
    <property type="project" value="TreeGrafter"/>
</dbReference>
<dbReference type="GO" id="GO:0015297">
    <property type="term" value="F:antiporter activity"/>
    <property type="evidence" value="ECO:0007669"/>
    <property type="project" value="TreeGrafter"/>
</dbReference>
<dbReference type="GO" id="GO:0015220">
    <property type="term" value="F:choline transmembrane transporter activity"/>
    <property type="evidence" value="ECO:0007669"/>
    <property type="project" value="TreeGrafter"/>
</dbReference>
<dbReference type="GO" id="GO:0015606">
    <property type="term" value="F:spermidine transmembrane transporter activity"/>
    <property type="evidence" value="ECO:0007669"/>
    <property type="project" value="UniProtKB-UniRule"/>
</dbReference>
<dbReference type="GO" id="GO:0031460">
    <property type="term" value="P:glycine betaine transport"/>
    <property type="evidence" value="ECO:0007669"/>
    <property type="project" value="TreeGrafter"/>
</dbReference>
<dbReference type="FunFam" id="1.10.3730.20:FF:000001">
    <property type="entry name" value="Quaternary ammonium compound resistance transporter SugE"/>
    <property type="match status" value="1"/>
</dbReference>
<dbReference type="Gene3D" id="1.10.3730.20">
    <property type="match status" value="1"/>
</dbReference>
<dbReference type="HAMAP" id="MF_01597">
    <property type="entry name" value="MdtI"/>
    <property type="match status" value="1"/>
</dbReference>
<dbReference type="InterPro" id="IPR000390">
    <property type="entry name" value="Small_drug/metabolite_transptr"/>
</dbReference>
<dbReference type="InterPro" id="IPR045324">
    <property type="entry name" value="Small_multidrug_res"/>
</dbReference>
<dbReference type="InterPro" id="IPR023737">
    <property type="entry name" value="Spermidine_export_MdtI"/>
</dbReference>
<dbReference type="NCBIfam" id="NF007934">
    <property type="entry name" value="PRK10650.1"/>
    <property type="match status" value="1"/>
</dbReference>
<dbReference type="PANTHER" id="PTHR30561">
    <property type="entry name" value="SMR FAMILY PROTON-DEPENDENT DRUG EFFLUX TRANSPORTER SUGE"/>
    <property type="match status" value="1"/>
</dbReference>
<dbReference type="PANTHER" id="PTHR30561:SF6">
    <property type="entry name" value="SPERMIDINE EXPORT PROTEIN MDTI"/>
    <property type="match status" value="1"/>
</dbReference>
<dbReference type="Pfam" id="PF00893">
    <property type="entry name" value="Multi_Drug_Res"/>
    <property type="match status" value="1"/>
</dbReference>
<dbReference type="SUPFAM" id="SSF103481">
    <property type="entry name" value="Multidrug resistance efflux transporter EmrE"/>
    <property type="match status" value="1"/>
</dbReference>
<evidence type="ECO:0000255" key="1">
    <source>
        <dbReference type="HAMAP-Rule" id="MF_01597"/>
    </source>
</evidence>
<feature type="chain" id="PRO_1000197310" description="Spermidine export protein MdtI">
    <location>
        <begin position="1"/>
        <end position="109"/>
    </location>
</feature>
<feature type="transmembrane region" description="Helical" evidence="1">
    <location>
        <begin position="6"/>
        <end position="26"/>
    </location>
</feature>
<feature type="transmembrane region" description="Helical" evidence="1">
    <location>
        <begin position="36"/>
        <end position="56"/>
    </location>
</feature>
<feature type="transmembrane region" description="Helical" evidence="1">
    <location>
        <begin position="64"/>
        <end position="84"/>
    </location>
</feature>
<feature type="transmembrane region" description="Helical" evidence="1">
    <location>
        <begin position="88"/>
        <end position="108"/>
    </location>
</feature>
<accession>B1XF64</accession>
<comment type="function">
    <text evidence="1">Catalyzes the excretion of spermidine.</text>
</comment>
<comment type="subunit">
    <text evidence="1">Forms a complex with MdtJ.</text>
</comment>
<comment type="subcellular location">
    <subcellularLocation>
        <location evidence="1">Cell inner membrane</location>
        <topology evidence="1">Multi-pass membrane protein</topology>
    </subcellularLocation>
</comment>
<comment type="similarity">
    <text evidence="1">Belongs to the drug/metabolite transporter (DMT) superfamily. Small multidrug resistance (SMR) (TC 2.A.7.1) family. MdtI subfamily.</text>
</comment>
<name>MDTI_ECODH</name>
<keyword id="KW-0997">Cell inner membrane</keyword>
<keyword id="KW-1003">Cell membrane</keyword>
<keyword id="KW-0472">Membrane</keyword>
<keyword id="KW-0812">Transmembrane</keyword>
<keyword id="KW-1133">Transmembrane helix</keyword>
<keyword id="KW-0813">Transport</keyword>
<organism>
    <name type="scientific">Escherichia coli (strain K12 / DH10B)</name>
    <dbReference type="NCBI Taxonomy" id="316385"/>
    <lineage>
        <taxon>Bacteria</taxon>
        <taxon>Pseudomonadati</taxon>
        <taxon>Pseudomonadota</taxon>
        <taxon>Gammaproteobacteria</taxon>
        <taxon>Enterobacterales</taxon>
        <taxon>Enterobacteriaceae</taxon>
        <taxon>Escherichia</taxon>
    </lineage>
</organism>
<protein>
    <recommendedName>
        <fullName evidence="1">Spermidine export protein MdtI</fullName>
    </recommendedName>
</protein>